<sequence>MNSGIDLEMSFTQGVQNLGLSHELAHLLWIPLPMLLVLVSAVIGVLVTVWLERKISAAAQQRIGPEYAGALGILQPMADGLKLLVKEDIIPARADSVLFTVGPILVLVPVILSWLIVPFGQNLLISNVGIGIFLWIALSSIQPIGLLMSGYSSNNKYSLLGGLRAAAQSISYEIPLALAVLAIVMMSNSLSTVDIVEQQNTAGFLSWNIWRQPVGFIIFWICALAECERLPFDLPEAEEELVAGYQTEYSGMKFALFYLAGYINLVLSALLVSVLYLGGWGFPISIDWFSSFIGLSIDNPLVQIIAASLGIVMTILKAYLLVFLAILLRWTTPRVRIDQLLDLGWKFLLPISLVNLLVTASLKLAFPMTFGG</sequence>
<keyword id="KW-0472">Membrane</keyword>
<keyword id="KW-0520">NAD</keyword>
<keyword id="KW-0521">NADP</keyword>
<keyword id="KW-0618">Plastoquinone</keyword>
<keyword id="KW-0874">Quinone</keyword>
<keyword id="KW-1185">Reference proteome</keyword>
<keyword id="KW-0793">Thylakoid</keyword>
<keyword id="KW-1278">Translocase</keyword>
<keyword id="KW-0812">Transmembrane</keyword>
<keyword id="KW-1133">Transmembrane helix</keyword>
<organism>
    <name type="scientific">Prochlorococcus marinus (strain NATL2A)</name>
    <dbReference type="NCBI Taxonomy" id="59920"/>
    <lineage>
        <taxon>Bacteria</taxon>
        <taxon>Bacillati</taxon>
        <taxon>Cyanobacteriota</taxon>
        <taxon>Cyanophyceae</taxon>
        <taxon>Synechococcales</taxon>
        <taxon>Prochlorococcaceae</taxon>
        <taxon>Prochlorococcus</taxon>
    </lineage>
</organism>
<reference key="1">
    <citation type="journal article" date="2007" name="PLoS Genet.">
        <title>Patterns and implications of gene gain and loss in the evolution of Prochlorococcus.</title>
        <authorList>
            <person name="Kettler G.C."/>
            <person name="Martiny A.C."/>
            <person name="Huang K."/>
            <person name="Zucker J."/>
            <person name="Coleman M.L."/>
            <person name="Rodrigue S."/>
            <person name="Chen F."/>
            <person name="Lapidus A."/>
            <person name="Ferriera S."/>
            <person name="Johnson J."/>
            <person name="Steglich C."/>
            <person name="Church G.M."/>
            <person name="Richardson P."/>
            <person name="Chisholm S.W."/>
        </authorList>
    </citation>
    <scope>NUCLEOTIDE SEQUENCE [LARGE SCALE GENOMIC DNA]</scope>
    <source>
        <strain>NATL2A</strain>
    </source>
</reference>
<gene>
    <name evidence="1" type="primary">ndhA</name>
    <name type="ordered locus">PMN2A_1527</name>
</gene>
<evidence type="ECO:0000255" key="1">
    <source>
        <dbReference type="HAMAP-Rule" id="MF_01350"/>
    </source>
</evidence>
<accession>Q46HL3</accession>
<protein>
    <recommendedName>
        <fullName evidence="1">NAD(P)H-quinone oxidoreductase subunit 1</fullName>
        <ecNumber evidence="1">7.1.1.-</ecNumber>
    </recommendedName>
    <alternativeName>
        <fullName evidence="1">NAD(P)H dehydrogenase I subunit 1</fullName>
    </alternativeName>
    <alternativeName>
        <fullName evidence="1">NDH-1 subunit 1</fullName>
    </alternativeName>
    <alternativeName>
        <fullName evidence="1">NDH-A</fullName>
    </alternativeName>
</protein>
<name>NU1C_PROMT</name>
<proteinExistence type="inferred from homology"/>
<comment type="function">
    <text evidence="1">NDH-1 shuttles electrons from an unknown electron donor, via FMN and iron-sulfur (Fe-S) centers, to quinones in the respiratory and/or the photosynthetic chain. The immediate electron acceptor for the enzyme in this species is believed to be plastoquinone. Couples the redox reaction to proton translocation, and thus conserves the redox energy in a proton gradient.</text>
</comment>
<comment type="catalytic activity">
    <reaction evidence="1">
        <text>a plastoquinone + NADH + (n+1) H(+)(in) = a plastoquinol + NAD(+) + n H(+)(out)</text>
        <dbReference type="Rhea" id="RHEA:42608"/>
        <dbReference type="Rhea" id="RHEA-COMP:9561"/>
        <dbReference type="Rhea" id="RHEA-COMP:9562"/>
        <dbReference type="ChEBI" id="CHEBI:15378"/>
        <dbReference type="ChEBI" id="CHEBI:17757"/>
        <dbReference type="ChEBI" id="CHEBI:57540"/>
        <dbReference type="ChEBI" id="CHEBI:57945"/>
        <dbReference type="ChEBI" id="CHEBI:62192"/>
    </reaction>
</comment>
<comment type="catalytic activity">
    <reaction evidence="1">
        <text>a plastoquinone + NADPH + (n+1) H(+)(in) = a plastoquinol + NADP(+) + n H(+)(out)</text>
        <dbReference type="Rhea" id="RHEA:42612"/>
        <dbReference type="Rhea" id="RHEA-COMP:9561"/>
        <dbReference type="Rhea" id="RHEA-COMP:9562"/>
        <dbReference type="ChEBI" id="CHEBI:15378"/>
        <dbReference type="ChEBI" id="CHEBI:17757"/>
        <dbReference type="ChEBI" id="CHEBI:57783"/>
        <dbReference type="ChEBI" id="CHEBI:58349"/>
        <dbReference type="ChEBI" id="CHEBI:62192"/>
    </reaction>
</comment>
<comment type="subunit">
    <text evidence="1">NDH-1 is composed of at least 11 different subunits.</text>
</comment>
<comment type="subcellular location">
    <subcellularLocation>
        <location evidence="1">Cellular thylakoid membrane</location>
        <topology evidence="1">Multi-pass membrane protein</topology>
    </subcellularLocation>
</comment>
<comment type="similarity">
    <text evidence="1">Belongs to the complex I subunit 1 family.</text>
</comment>
<feature type="chain" id="PRO_0000240041" description="NAD(P)H-quinone oxidoreductase subunit 1">
    <location>
        <begin position="1"/>
        <end position="372"/>
    </location>
</feature>
<feature type="transmembrane region" description="Helical" evidence="1">
    <location>
        <begin position="27"/>
        <end position="47"/>
    </location>
</feature>
<feature type="transmembrane region" description="Helical" evidence="1">
    <location>
        <begin position="97"/>
        <end position="117"/>
    </location>
</feature>
<feature type="transmembrane region" description="Helical" evidence="1">
    <location>
        <begin position="128"/>
        <end position="148"/>
    </location>
</feature>
<feature type="transmembrane region" description="Helical" evidence="1">
    <location>
        <begin position="166"/>
        <end position="186"/>
    </location>
</feature>
<feature type="transmembrane region" description="Helical" evidence="1">
    <location>
        <begin position="204"/>
        <end position="224"/>
    </location>
</feature>
<feature type="transmembrane region" description="Helical" evidence="1">
    <location>
        <begin position="266"/>
        <end position="286"/>
    </location>
</feature>
<feature type="transmembrane region" description="Helical" evidence="1">
    <location>
        <begin position="308"/>
        <end position="328"/>
    </location>
</feature>
<feature type="transmembrane region" description="Helical" evidence="1">
    <location>
        <begin position="347"/>
        <end position="367"/>
    </location>
</feature>
<dbReference type="EC" id="7.1.1.-" evidence="1"/>
<dbReference type="EMBL" id="CP000095">
    <property type="protein sequence ID" value="AAZ59015.1"/>
    <property type="molecule type" value="Genomic_DNA"/>
</dbReference>
<dbReference type="RefSeq" id="WP_011294160.1">
    <property type="nucleotide sequence ID" value="NC_007335.2"/>
</dbReference>
<dbReference type="SMR" id="Q46HL3"/>
<dbReference type="STRING" id="59920.PMN2A_1527"/>
<dbReference type="KEGG" id="pmn:PMN2A_1527"/>
<dbReference type="HOGENOM" id="CLU_015134_0_1_3"/>
<dbReference type="OrthoDB" id="9803734at2"/>
<dbReference type="PhylomeDB" id="Q46HL3"/>
<dbReference type="Proteomes" id="UP000002535">
    <property type="component" value="Chromosome"/>
</dbReference>
<dbReference type="GO" id="GO:0031676">
    <property type="term" value="C:plasma membrane-derived thylakoid membrane"/>
    <property type="evidence" value="ECO:0007669"/>
    <property type="project" value="UniProtKB-SubCell"/>
</dbReference>
<dbReference type="GO" id="GO:0003954">
    <property type="term" value="F:NADH dehydrogenase activity"/>
    <property type="evidence" value="ECO:0007669"/>
    <property type="project" value="TreeGrafter"/>
</dbReference>
<dbReference type="GO" id="GO:0016655">
    <property type="term" value="F:oxidoreductase activity, acting on NAD(P)H, quinone or similar compound as acceptor"/>
    <property type="evidence" value="ECO:0007669"/>
    <property type="project" value="UniProtKB-UniRule"/>
</dbReference>
<dbReference type="GO" id="GO:0048038">
    <property type="term" value="F:quinone binding"/>
    <property type="evidence" value="ECO:0007669"/>
    <property type="project" value="UniProtKB-KW"/>
</dbReference>
<dbReference type="GO" id="GO:0009060">
    <property type="term" value="P:aerobic respiration"/>
    <property type="evidence" value="ECO:0007669"/>
    <property type="project" value="TreeGrafter"/>
</dbReference>
<dbReference type="GO" id="GO:0019684">
    <property type="term" value="P:photosynthesis, light reaction"/>
    <property type="evidence" value="ECO:0007669"/>
    <property type="project" value="UniProtKB-UniRule"/>
</dbReference>
<dbReference type="HAMAP" id="MF_01350">
    <property type="entry name" value="NDH1_NuoH"/>
    <property type="match status" value="1"/>
</dbReference>
<dbReference type="InterPro" id="IPR001694">
    <property type="entry name" value="NADH_UbQ_OxRdtase_su1/FPO"/>
</dbReference>
<dbReference type="InterPro" id="IPR018086">
    <property type="entry name" value="NADH_UbQ_OxRdtase_su1_CS"/>
</dbReference>
<dbReference type="NCBIfam" id="NF004741">
    <property type="entry name" value="PRK06076.1-2"/>
    <property type="match status" value="1"/>
</dbReference>
<dbReference type="NCBIfam" id="NF004744">
    <property type="entry name" value="PRK06076.1-5"/>
    <property type="match status" value="1"/>
</dbReference>
<dbReference type="PANTHER" id="PTHR11432">
    <property type="entry name" value="NADH DEHYDROGENASE SUBUNIT 1"/>
    <property type="match status" value="1"/>
</dbReference>
<dbReference type="PANTHER" id="PTHR11432:SF3">
    <property type="entry name" value="NADH-UBIQUINONE OXIDOREDUCTASE CHAIN 1"/>
    <property type="match status" value="1"/>
</dbReference>
<dbReference type="Pfam" id="PF00146">
    <property type="entry name" value="NADHdh"/>
    <property type="match status" value="1"/>
</dbReference>
<dbReference type="PROSITE" id="PS00667">
    <property type="entry name" value="COMPLEX1_ND1_1"/>
    <property type="match status" value="1"/>
</dbReference>
<dbReference type="PROSITE" id="PS00668">
    <property type="entry name" value="COMPLEX1_ND1_2"/>
    <property type="match status" value="1"/>
</dbReference>